<organism>
    <name type="scientific">Vibrio parahaemolyticus serotype O3:K6 (strain RIMD 2210633)</name>
    <dbReference type="NCBI Taxonomy" id="223926"/>
    <lineage>
        <taxon>Bacteria</taxon>
        <taxon>Pseudomonadati</taxon>
        <taxon>Pseudomonadota</taxon>
        <taxon>Gammaproteobacteria</taxon>
        <taxon>Vibrionales</taxon>
        <taxon>Vibrionaceae</taxon>
        <taxon>Vibrio</taxon>
    </lineage>
</organism>
<accession>Q87LQ2</accession>
<sequence length="234" mass="25470">MSENVSSHIAIVPAAGVGSRMKADRPKQYLLIDGKTVLEHTVEKLLAHPQIAKVVVAVTEGDPYYPELSIALHPDVIRVAGGKERADSVLSGLNYVSAQLPCEWVLVHDAARPCVTLNDIDRLIDVCCAHPTGGILASPVRDTMKRANKENNIDHTVDREALWHALTPQMFKTQQLTRALADALQQGVAITDEASALEWLGETPALVQGSANNIKITQPEDLALAEFYLSRERG</sequence>
<gene>
    <name type="primary">ispD</name>
    <name type="ordered locus">VP2559</name>
</gene>
<feature type="chain" id="PRO_0000075644" description="2-C-methyl-D-erythritol 4-phosphate cytidylyltransferase">
    <location>
        <begin position="1"/>
        <end position="234"/>
    </location>
</feature>
<feature type="site" description="Transition state stabilizer" evidence="1">
    <location>
        <position position="20"/>
    </location>
</feature>
<feature type="site" description="Transition state stabilizer" evidence="1">
    <location>
        <position position="27"/>
    </location>
</feature>
<feature type="site" description="Positions MEP for the nucleophilic attack" evidence="1">
    <location>
        <position position="159"/>
    </location>
</feature>
<feature type="site" description="Positions MEP for the nucleophilic attack" evidence="1">
    <location>
        <position position="215"/>
    </location>
</feature>
<keyword id="KW-0414">Isoprene biosynthesis</keyword>
<keyword id="KW-0548">Nucleotidyltransferase</keyword>
<keyword id="KW-0808">Transferase</keyword>
<proteinExistence type="inferred from homology"/>
<dbReference type="EC" id="2.7.7.60"/>
<dbReference type="EMBL" id="BA000031">
    <property type="protein sequence ID" value="BAC60822.1"/>
    <property type="molecule type" value="Genomic_DNA"/>
</dbReference>
<dbReference type="RefSeq" id="NP_798938.1">
    <property type="nucleotide sequence ID" value="NC_004603.1"/>
</dbReference>
<dbReference type="RefSeq" id="WP_005478544.1">
    <property type="nucleotide sequence ID" value="NC_004603.1"/>
</dbReference>
<dbReference type="SMR" id="Q87LQ2"/>
<dbReference type="GeneID" id="1190083"/>
<dbReference type="KEGG" id="vpa:VP2559"/>
<dbReference type="PATRIC" id="fig|223926.6.peg.2457"/>
<dbReference type="eggNOG" id="COG1211">
    <property type="taxonomic scope" value="Bacteria"/>
</dbReference>
<dbReference type="HOGENOM" id="CLU_061281_3_1_6"/>
<dbReference type="UniPathway" id="UPA00056">
    <property type="reaction ID" value="UER00093"/>
</dbReference>
<dbReference type="Proteomes" id="UP000002493">
    <property type="component" value="Chromosome 1"/>
</dbReference>
<dbReference type="GO" id="GO:0050518">
    <property type="term" value="F:2-C-methyl-D-erythritol 4-phosphate cytidylyltransferase activity"/>
    <property type="evidence" value="ECO:0007669"/>
    <property type="project" value="UniProtKB-UniRule"/>
</dbReference>
<dbReference type="GO" id="GO:0019288">
    <property type="term" value="P:isopentenyl diphosphate biosynthetic process, methylerythritol 4-phosphate pathway"/>
    <property type="evidence" value="ECO:0007669"/>
    <property type="project" value="UniProtKB-UniRule"/>
</dbReference>
<dbReference type="CDD" id="cd02516">
    <property type="entry name" value="CDP-ME_synthetase"/>
    <property type="match status" value="1"/>
</dbReference>
<dbReference type="FunFam" id="3.90.550.10:FF:000003">
    <property type="entry name" value="2-C-methyl-D-erythritol 4-phosphate cytidylyltransferase"/>
    <property type="match status" value="1"/>
</dbReference>
<dbReference type="Gene3D" id="3.90.550.10">
    <property type="entry name" value="Spore Coat Polysaccharide Biosynthesis Protein SpsA, Chain A"/>
    <property type="match status" value="1"/>
</dbReference>
<dbReference type="HAMAP" id="MF_00108">
    <property type="entry name" value="IspD"/>
    <property type="match status" value="1"/>
</dbReference>
<dbReference type="InterPro" id="IPR001228">
    <property type="entry name" value="IspD"/>
</dbReference>
<dbReference type="InterPro" id="IPR034683">
    <property type="entry name" value="IspD/TarI"/>
</dbReference>
<dbReference type="InterPro" id="IPR050088">
    <property type="entry name" value="IspD/TarI_cytidylyltransf_bact"/>
</dbReference>
<dbReference type="InterPro" id="IPR018294">
    <property type="entry name" value="ISPD_synthase_CS"/>
</dbReference>
<dbReference type="InterPro" id="IPR029044">
    <property type="entry name" value="Nucleotide-diphossugar_trans"/>
</dbReference>
<dbReference type="NCBIfam" id="TIGR00453">
    <property type="entry name" value="ispD"/>
    <property type="match status" value="1"/>
</dbReference>
<dbReference type="PANTHER" id="PTHR32125">
    <property type="entry name" value="2-C-METHYL-D-ERYTHRITOL 4-PHOSPHATE CYTIDYLYLTRANSFERASE, CHLOROPLASTIC"/>
    <property type="match status" value="1"/>
</dbReference>
<dbReference type="PANTHER" id="PTHR32125:SF4">
    <property type="entry name" value="2-C-METHYL-D-ERYTHRITOL 4-PHOSPHATE CYTIDYLYLTRANSFERASE, CHLOROPLASTIC"/>
    <property type="match status" value="1"/>
</dbReference>
<dbReference type="Pfam" id="PF01128">
    <property type="entry name" value="IspD"/>
    <property type="match status" value="1"/>
</dbReference>
<dbReference type="SUPFAM" id="SSF53448">
    <property type="entry name" value="Nucleotide-diphospho-sugar transferases"/>
    <property type="match status" value="1"/>
</dbReference>
<dbReference type="PROSITE" id="PS01295">
    <property type="entry name" value="ISPD"/>
    <property type="match status" value="1"/>
</dbReference>
<evidence type="ECO:0000250" key="1"/>
<evidence type="ECO:0000305" key="2"/>
<reference key="1">
    <citation type="journal article" date="2003" name="Lancet">
        <title>Genome sequence of Vibrio parahaemolyticus: a pathogenic mechanism distinct from that of V. cholerae.</title>
        <authorList>
            <person name="Makino K."/>
            <person name="Oshima K."/>
            <person name="Kurokawa K."/>
            <person name="Yokoyama K."/>
            <person name="Uda T."/>
            <person name="Tagomori K."/>
            <person name="Iijima Y."/>
            <person name="Najima M."/>
            <person name="Nakano M."/>
            <person name="Yamashita A."/>
            <person name="Kubota Y."/>
            <person name="Kimura S."/>
            <person name="Yasunaga T."/>
            <person name="Honda T."/>
            <person name="Shinagawa H."/>
            <person name="Hattori M."/>
            <person name="Iida T."/>
        </authorList>
    </citation>
    <scope>NUCLEOTIDE SEQUENCE [LARGE SCALE GENOMIC DNA]</scope>
    <source>
        <strain>RIMD 2210633</strain>
    </source>
</reference>
<name>ISPD_VIBPA</name>
<protein>
    <recommendedName>
        <fullName>2-C-methyl-D-erythritol 4-phosphate cytidylyltransferase</fullName>
        <ecNumber>2.7.7.60</ecNumber>
    </recommendedName>
    <alternativeName>
        <fullName>4-diphosphocytidyl-2C-methyl-D-erythritol synthase</fullName>
    </alternativeName>
    <alternativeName>
        <fullName>MEP cytidylyltransferase</fullName>
        <shortName>MCT</shortName>
    </alternativeName>
</protein>
<comment type="function">
    <text evidence="1">Catalyzes the formation of 4-diphosphocytidyl-2-C-methyl-D-erythritol from CTP and 2-C-methyl-D-erythritol 4-phosphate (MEP).</text>
</comment>
<comment type="catalytic activity">
    <reaction>
        <text>2-C-methyl-D-erythritol 4-phosphate + CTP + H(+) = 4-CDP-2-C-methyl-D-erythritol + diphosphate</text>
        <dbReference type="Rhea" id="RHEA:13429"/>
        <dbReference type="ChEBI" id="CHEBI:15378"/>
        <dbReference type="ChEBI" id="CHEBI:33019"/>
        <dbReference type="ChEBI" id="CHEBI:37563"/>
        <dbReference type="ChEBI" id="CHEBI:57823"/>
        <dbReference type="ChEBI" id="CHEBI:58262"/>
        <dbReference type="EC" id="2.7.7.60"/>
    </reaction>
</comment>
<comment type="pathway">
    <text>Isoprenoid biosynthesis; isopentenyl diphosphate biosynthesis via DXP pathway; isopentenyl diphosphate from 1-deoxy-D-xylulose 5-phosphate: step 2/6.</text>
</comment>
<comment type="similarity">
    <text evidence="2">Belongs to the IspD/TarI cytidylyltransferase family. IspD subfamily.</text>
</comment>